<dbReference type="EMBL" id="CP001032">
    <property type="protein sequence ID" value="ACB73495.1"/>
    <property type="molecule type" value="Genomic_DNA"/>
</dbReference>
<dbReference type="RefSeq" id="WP_012373033.1">
    <property type="nucleotide sequence ID" value="NC_010571.1"/>
</dbReference>
<dbReference type="SMR" id="B1ZNC6"/>
<dbReference type="STRING" id="452637.Oter_0204"/>
<dbReference type="KEGG" id="ote:Oter_0204"/>
<dbReference type="eggNOG" id="COG0099">
    <property type="taxonomic scope" value="Bacteria"/>
</dbReference>
<dbReference type="HOGENOM" id="CLU_103849_1_2_0"/>
<dbReference type="OrthoDB" id="9803610at2"/>
<dbReference type="Proteomes" id="UP000007013">
    <property type="component" value="Chromosome"/>
</dbReference>
<dbReference type="GO" id="GO:0005829">
    <property type="term" value="C:cytosol"/>
    <property type="evidence" value="ECO:0007669"/>
    <property type="project" value="TreeGrafter"/>
</dbReference>
<dbReference type="GO" id="GO:0015935">
    <property type="term" value="C:small ribosomal subunit"/>
    <property type="evidence" value="ECO:0007669"/>
    <property type="project" value="TreeGrafter"/>
</dbReference>
<dbReference type="GO" id="GO:0019843">
    <property type="term" value="F:rRNA binding"/>
    <property type="evidence" value="ECO:0007669"/>
    <property type="project" value="UniProtKB-UniRule"/>
</dbReference>
<dbReference type="GO" id="GO:0003735">
    <property type="term" value="F:structural constituent of ribosome"/>
    <property type="evidence" value="ECO:0007669"/>
    <property type="project" value="InterPro"/>
</dbReference>
<dbReference type="GO" id="GO:0000049">
    <property type="term" value="F:tRNA binding"/>
    <property type="evidence" value="ECO:0007669"/>
    <property type="project" value="UniProtKB-UniRule"/>
</dbReference>
<dbReference type="GO" id="GO:0006412">
    <property type="term" value="P:translation"/>
    <property type="evidence" value="ECO:0007669"/>
    <property type="project" value="UniProtKB-UniRule"/>
</dbReference>
<dbReference type="FunFam" id="1.10.8.50:FF:000001">
    <property type="entry name" value="30S ribosomal protein S13"/>
    <property type="match status" value="1"/>
</dbReference>
<dbReference type="Gene3D" id="1.10.8.50">
    <property type="match status" value="1"/>
</dbReference>
<dbReference type="Gene3D" id="4.10.910.10">
    <property type="entry name" value="30s ribosomal protein s13, domain 2"/>
    <property type="match status" value="1"/>
</dbReference>
<dbReference type="HAMAP" id="MF_01315">
    <property type="entry name" value="Ribosomal_uS13"/>
    <property type="match status" value="1"/>
</dbReference>
<dbReference type="InterPro" id="IPR027437">
    <property type="entry name" value="Rbsml_uS13_C"/>
</dbReference>
<dbReference type="InterPro" id="IPR001892">
    <property type="entry name" value="Ribosomal_uS13"/>
</dbReference>
<dbReference type="InterPro" id="IPR010979">
    <property type="entry name" value="Ribosomal_uS13-like_H2TH"/>
</dbReference>
<dbReference type="InterPro" id="IPR019980">
    <property type="entry name" value="Ribosomal_uS13_bac-type"/>
</dbReference>
<dbReference type="InterPro" id="IPR018269">
    <property type="entry name" value="Ribosomal_uS13_CS"/>
</dbReference>
<dbReference type="NCBIfam" id="TIGR03631">
    <property type="entry name" value="uS13_bact"/>
    <property type="match status" value="1"/>
</dbReference>
<dbReference type="PANTHER" id="PTHR10871">
    <property type="entry name" value="30S RIBOSOMAL PROTEIN S13/40S RIBOSOMAL PROTEIN S18"/>
    <property type="match status" value="1"/>
</dbReference>
<dbReference type="PANTHER" id="PTHR10871:SF1">
    <property type="entry name" value="SMALL RIBOSOMAL SUBUNIT PROTEIN US13M"/>
    <property type="match status" value="1"/>
</dbReference>
<dbReference type="Pfam" id="PF00416">
    <property type="entry name" value="Ribosomal_S13"/>
    <property type="match status" value="1"/>
</dbReference>
<dbReference type="PIRSF" id="PIRSF002134">
    <property type="entry name" value="Ribosomal_S13"/>
    <property type="match status" value="1"/>
</dbReference>
<dbReference type="SUPFAM" id="SSF46946">
    <property type="entry name" value="S13-like H2TH domain"/>
    <property type="match status" value="1"/>
</dbReference>
<dbReference type="PROSITE" id="PS00646">
    <property type="entry name" value="RIBOSOMAL_S13_1"/>
    <property type="match status" value="1"/>
</dbReference>
<dbReference type="PROSITE" id="PS50159">
    <property type="entry name" value="RIBOSOMAL_S13_2"/>
    <property type="match status" value="1"/>
</dbReference>
<feature type="chain" id="PRO_1000141295" description="Small ribosomal subunit protein uS13">
    <location>
        <begin position="1"/>
        <end position="129"/>
    </location>
</feature>
<feature type="region of interest" description="Disordered" evidence="2">
    <location>
        <begin position="96"/>
        <end position="129"/>
    </location>
</feature>
<name>RS13_OPITP</name>
<gene>
    <name evidence="1" type="primary">rpsM</name>
    <name type="ordered locus">Oter_0204</name>
</gene>
<reference key="1">
    <citation type="journal article" date="2011" name="J. Bacteriol.">
        <title>Genome sequence of the verrucomicrobium Opitutus terrae PB90-1, an abundant inhabitant of rice paddy soil ecosystems.</title>
        <authorList>
            <person name="van Passel M.W."/>
            <person name="Kant R."/>
            <person name="Palva A."/>
            <person name="Copeland A."/>
            <person name="Lucas S."/>
            <person name="Lapidus A."/>
            <person name="Glavina del Rio T."/>
            <person name="Pitluck S."/>
            <person name="Goltsman E."/>
            <person name="Clum A."/>
            <person name="Sun H."/>
            <person name="Schmutz J."/>
            <person name="Larimer F.W."/>
            <person name="Land M.L."/>
            <person name="Hauser L."/>
            <person name="Kyrpides N."/>
            <person name="Mikhailova N."/>
            <person name="Richardson P.P."/>
            <person name="Janssen P.H."/>
            <person name="de Vos W.M."/>
            <person name="Smidt H."/>
        </authorList>
    </citation>
    <scope>NUCLEOTIDE SEQUENCE [LARGE SCALE GENOMIC DNA]</scope>
    <source>
        <strain>DSM 11246 / JCM 15787 / PB90-1</strain>
    </source>
</reference>
<proteinExistence type="inferred from homology"/>
<organism>
    <name type="scientific">Opitutus terrae (strain DSM 11246 / JCM 15787 / PB90-1)</name>
    <dbReference type="NCBI Taxonomy" id="452637"/>
    <lineage>
        <taxon>Bacteria</taxon>
        <taxon>Pseudomonadati</taxon>
        <taxon>Verrucomicrobiota</taxon>
        <taxon>Opitutia</taxon>
        <taxon>Opitutales</taxon>
        <taxon>Opitutaceae</taxon>
        <taxon>Opitutus</taxon>
    </lineage>
</organism>
<keyword id="KW-1185">Reference proteome</keyword>
<keyword id="KW-0687">Ribonucleoprotein</keyword>
<keyword id="KW-0689">Ribosomal protein</keyword>
<keyword id="KW-0694">RNA-binding</keyword>
<keyword id="KW-0699">rRNA-binding</keyword>
<keyword id="KW-0820">tRNA-binding</keyword>
<accession>B1ZNC6</accession>
<protein>
    <recommendedName>
        <fullName evidence="1">Small ribosomal subunit protein uS13</fullName>
    </recommendedName>
    <alternativeName>
        <fullName evidence="3">30S ribosomal protein S13</fullName>
    </alternativeName>
</protein>
<comment type="function">
    <text evidence="1">Located at the top of the head of the 30S subunit, it contacts several helices of the 16S rRNA. In the 70S ribosome it contacts the 23S rRNA (bridge B1a) and protein L5 of the 50S subunit (bridge B1b), connecting the 2 subunits; these bridges are implicated in subunit movement. Contacts the tRNAs in the A and P-sites.</text>
</comment>
<comment type="subunit">
    <text evidence="1">Part of the 30S ribosomal subunit. Forms a loose heterodimer with protein S19. Forms two bridges to the 50S subunit in the 70S ribosome.</text>
</comment>
<comment type="similarity">
    <text evidence="1">Belongs to the universal ribosomal protein uS13 family.</text>
</comment>
<evidence type="ECO:0000255" key="1">
    <source>
        <dbReference type="HAMAP-Rule" id="MF_01315"/>
    </source>
</evidence>
<evidence type="ECO:0000256" key="2">
    <source>
        <dbReference type="SAM" id="MobiDB-lite"/>
    </source>
</evidence>
<evidence type="ECO:0000305" key="3"/>
<sequence length="129" mass="14371">MPRLLGVEIPAKKKVAYSLRYINGIGPTRADLLVKEAGLSPDMRAQDLTEEQLNKILHLITEHKWVLEGDLRREIAGNLKRLQAINCYRGVRHRRGLPVRGQRTSTNARTRKGPRKTVGVSKAAAAAKA</sequence>